<comment type="function">
    <text evidence="1">Transcriptional repressor that controls expression of the genes required for the catabolism of sialic acids.</text>
</comment>
<comment type="similarity">
    <text evidence="1">Belongs to the NanR family.</text>
</comment>
<accession>B7NKT7</accession>
<dbReference type="EMBL" id="CU928164">
    <property type="protein sequence ID" value="CAR19831.1"/>
    <property type="molecule type" value="Genomic_DNA"/>
</dbReference>
<dbReference type="RefSeq" id="WP_000523850.1">
    <property type="nucleotide sequence ID" value="NC_011750.1"/>
</dbReference>
<dbReference type="RefSeq" id="YP_002409618.1">
    <property type="nucleotide sequence ID" value="NC_011750.1"/>
</dbReference>
<dbReference type="SMR" id="B7NKT7"/>
<dbReference type="STRING" id="585057.ECIAI39_3715"/>
<dbReference type="KEGG" id="ect:ECIAI39_3715"/>
<dbReference type="PATRIC" id="fig|585057.6.peg.3850"/>
<dbReference type="HOGENOM" id="CLU_017584_9_1_6"/>
<dbReference type="Proteomes" id="UP000000749">
    <property type="component" value="Chromosome"/>
</dbReference>
<dbReference type="GO" id="GO:0003677">
    <property type="term" value="F:DNA binding"/>
    <property type="evidence" value="ECO:0007669"/>
    <property type="project" value="UniProtKB-KW"/>
</dbReference>
<dbReference type="GO" id="GO:0003700">
    <property type="term" value="F:DNA-binding transcription factor activity"/>
    <property type="evidence" value="ECO:0007669"/>
    <property type="project" value="UniProtKB-UniRule"/>
</dbReference>
<dbReference type="GO" id="GO:0045892">
    <property type="term" value="P:negative regulation of DNA-templated transcription"/>
    <property type="evidence" value="ECO:0007669"/>
    <property type="project" value="UniProtKB-UniRule"/>
</dbReference>
<dbReference type="CDD" id="cd07377">
    <property type="entry name" value="WHTH_GntR"/>
    <property type="match status" value="1"/>
</dbReference>
<dbReference type="FunFam" id="1.10.10.10:FF:000150">
    <property type="entry name" value="HTH-type transcriptional repressor NanR"/>
    <property type="match status" value="1"/>
</dbReference>
<dbReference type="FunFam" id="1.20.120.530:FF:000006">
    <property type="entry name" value="HTH-type transcriptional repressor NanR"/>
    <property type="match status" value="1"/>
</dbReference>
<dbReference type="Gene3D" id="1.20.120.530">
    <property type="entry name" value="GntR ligand-binding domain-like"/>
    <property type="match status" value="1"/>
</dbReference>
<dbReference type="Gene3D" id="1.10.10.10">
    <property type="entry name" value="Winged helix-like DNA-binding domain superfamily/Winged helix DNA-binding domain"/>
    <property type="match status" value="1"/>
</dbReference>
<dbReference type="HAMAP" id="MF_01236">
    <property type="entry name" value="HTH_NanR"/>
    <property type="match status" value="1"/>
</dbReference>
<dbReference type="InterPro" id="IPR011711">
    <property type="entry name" value="GntR_C"/>
</dbReference>
<dbReference type="InterPro" id="IPR008920">
    <property type="entry name" value="TF_FadR/GntR_C"/>
</dbReference>
<dbReference type="InterPro" id="IPR000524">
    <property type="entry name" value="Tscrpt_reg_HTH_GntR"/>
</dbReference>
<dbReference type="InterPro" id="IPR023730">
    <property type="entry name" value="Tscrpt_reg_NanR"/>
</dbReference>
<dbReference type="InterPro" id="IPR036388">
    <property type="entry name" value="WH-like_DNA-bd_sf"/>
</dbReference>
<dbReference type="InterPro" id="IPR036390">
    <property type="entry name" value="WH_DNA-bd_sf"/>
</dbReference>
<dbReference type="NCBIfam" id="NF003011">
    <property type="entry name" value="PRK03837.1"/>
    <property type="match status" value="1"/>
</dbReference>
<dbReference type="PANTHER" id="PTHR43537:SF53">
    <property type="entry name" value="HTH-TYPE TRANSCRIPTIONAL REPRESSOR NANR"/>
    <property type="match status" value="1"/>
</dbReference>
<dbReference type="PANTHER" id="PTHR43537">
    <property type="entry name" value="TRANSCRIPTIONAL REGULATOR, GNTR FAMILY"/>
    <property type="match status" value="1"/>
</dbReference>
<dbReference type="Pfam" id="PF07729">
    <property type="entry name" value="FCD"/>
    <property type="match status" value="1"/>
</dbReference>
<dbReference type="Pfam" id="PF00392">
    <property type="entry name" value="GntR"/>
    <property type="match status" value="1"/>
</dbReference>
<dbReference type="PRINTS" id="PR00035">
    <property type="entry name" value="HTHGNTR"/>
</dbReference>
<dbReference type="SMART" id="SM00895">
    <property type="entry name" value="FCD"/>
    <property type="match status" value="1"/>
</dbReference>
<dbReference type="SMART" id="SM00345">
    <property type="entry name" value="HTH_GNTR"/>
    <property type="match status" value="1"/>
</dbReference>
<dbReference type="SUPFAM" id="SSF48008">
    <property type="entry name" value="GntR ligand-binding domain-like"/>
    <property type="match status" value="1"/>
</dbReference>
<dbReference type="SUPFAM" id="SSF46785">
    <property type="entry name" value="Winged helix' DNA-binding domain"/>
    <property type="match status" value="1"/>
</dbReference>
<dbReference type="PROSITE" id="PS50949">
    <property type="entry name" value="HTH_GNTR"/>
    <property type="match status" value="1"/>
</dbReference>
<protein>
    <recommendedName>
        <fullName evidence="1">HTH-type transcriptional repressor NanR</fullName>
    </recommendedName>
</protein>
<sequence>MGLMNAFDSQTEDSSPVIGRNLRSRPLARKKLSEMVEEELEQMIRRREFGEGEQLPSERELMAFFNVGRPSVREALAALKRKGLVQINNGERARVSRPSADTIIGELSGMAKDFLSHPGGIAHFEQLRLFFESSLVRYAAEHATDEQIDLLAKALEINSQSLDNNAAFIRSDVDFHRVLAEIPGNPIFMAIHVALLDWLIAARPTVADQALHEHNNVSYQQHIAIVDAIRRHDPDEADRALQSHLNSVSATWHAFGQTTNKKK</sequence>
<proteinExistence type="inferred from homology"/>
<keyword id="KW-0238">DNA-binding</keyword>
<keyword id="KW-0678">Repressor</keyword>
<keyword id="KW-0804">Transcription</keyword>
<keyword id="KW-0805">Transcription regulation</keyword>
<feature type="chain" id="PRO_1000139720" description="HTH-type transcriptional repressor NanR">
    <location>
        <begin position="1"/>
        <end position="263"/>
    </location>
</feature>
<feature type="domain" description="HTH gntR-type" evidence="1">
    <location>
        <begin position="30"/>
        <end position="98"/>
    </location>
</feature>
<feature type="DNA-binding region" description="H-T-H motif" evidence="1">
    <location>
        <begin position="58"/>
        <end position="77"/>
    </location>
</feature>
<feature type="region of interest" description="Disordered" evidence="2">
    <location>
        <begin position="1"/>
        <end position="21"/>
    </location>
</feature>
<name>NANR_ECO7I</name>
<organism>
    <name type="scientific">Escherichia coli O7:K1 (strain IAI39 / ExPEC)</name>
    <dbReference type="NCBI Taxonomy" id="585057"/>
    <lineage>
        <taxon>Bacteria</taxon>
        <taxon>Pseudomonadati</taxon>
        <taxon>Pseudomonadota</taxon>
        <taxon>Gammaproteobacteria</taxon>
        <taxon>Enterobacterales</taxon>
        <taxon>Enterobacteriaceae</taxon>
        <taxon>Escherichia</taxon>
    </lineage>
</organism>
<gene>
    <name evidence="1" type="primary">nanR</name>
    <name type="ordered locus">ECIAI39_3715</name>
</gene>
<evidence type="ECO:0000255" key="1">
    <source>
        <dbReference type="HAMAP-Rule" id="MF_01236"/>
    </source>
</evidence>
<evidence type="ECO:0000256" key="2">
    <source>
        <dbReference type="SAM" id="MobiDB-lite"/>
    </source>
</evidence>
<reference key="1">
    <citation type="journal article" date="2009" name="PLoS Genet.">
        <title>Organised genome dynamics in the Escherichia coli species results in highly diverse adaptive paths.</title>
        <authorList>
            <person name="Touchon M."/>
            <person name="Hoede C."/>
            <person name="Tenaillon O."/>
            <person name="Barbe V."/>
            <person name="Baeriswyl S."/>
            <person name="Bidet P."/>
            <person name="Bingen E."/>
            <person name="Bonacorsi S."/>
            <person name="Bouchier C."/>
            <person name="Bouvet O."/>
            <person name="Calteau A."/>
            <person name="Chiapello H."/>
            <person name="Clermont O."/>
            <person name="Cruveiller S."/>
            <person name="Danchin A."/>
            <person name="Diard M."/>
            <person name="Dossat C."/>
            <person name="Karoui M.E."/>
            <person name="Frapy E."/>
            <person name="Garry L."/>
            <person name="Ghigo J.M."/>
            <person name="Gilles A.M."/>
            <person name="Johnson J."/>
            <person name="Le Bouguenec C."/>
            <person name="Lescat M."/>
            <person name="Mangenot S."/>
            <person name="Martinez-Jehanne V."/>
            <person name="Matic I."/>
            <person name="Nassif X."/>
            <person name="Oztas S."/>
            <person name="Petit M.A."/>
            <person name="Pichon C."/>
            <person name="Rouy Z."/>
            <person name="Ruf C.S."/>
            <person name="Schneider D."/>
            <person name="Tourret J."/>
            <person name="Vacherie B."/>
            <person name="Vallenet D."/>
            <person name="Medigue C."/>
            <person name="Rocha E.P.C."/>
            <person name="Denamur E."/>
        </authorList>
    </citation>
    <scope>NUCLEOTIDE SEQUENCE [LARGE SCALE GENOMIC DNA]</scope>
    <source>
        <strain>IAI39 / ExPEC</strain>
    </source>
</reference>